<sequence length="238" mass="26774">MSEVTTAEFNEEGKYLRKIRSFVLREGRLTKGQAQAIETQWPTMGLDYSPAPLDLADVFGRKADTVLEIGFGMGASLVQMAQEAPELNFIGIEVHKPGVGSCLSDAAAAGVTNLRVYHHDAMEVLEHAIADGSLTRVQLFFPDPWHKKRHHKRRIVQAEFAELIRRKLKIGGVFHMATDWENYSEHMLEVMNVASGYKNQSADGTVVPRPDHRPLTKFEARGHRLGHGVWDLMFERIA</sequence>
<feature type="chain" id="PRO_0000171386" description="tRNA (guanine-N(7)-)-methyltransferase">
    <location>
        <begin position="1"/>
        <end position="238"/>
    </location>
</feature>
<feature type="active site" evidence="1">
    <location>
        <position position="143"/>
    </location>
</feature>
<feature type="binding site" evidence="2">
    <location>
        <position position="68"/>
    </location>
    <ligand>
        <name>S-adenosyl-L-methionine</name>
        <dbReference type="ChEBI" id="CHEBI:59789"/>
    </ligand>
</feature>
<feature type="binding site" evidence="2">
    <location>
        <position position="93"/>
    </location>
    <ligand>
        <name>S-adenosyl-L-methionine</name>
        <dbReference type="ChEBI" id="CHEBI:59789"/>
    </ligand>
</feature>
<feature type="binding site" evidence="2">
    <location>
        <position position="120"/>
    </location>
    <ligand>
        <name>S-adenosyl-L-methionine</name>
        <dbReference type="ChEBI" id="CHEBI:59789"/>
    </ligand>
</feature>
<feature type="binding site" evidence="2">
    <location>
        <position position="143"/>
    </location>
    <ligand>
        <name>S-adenosyl-L-methionine</name>
        <dbReference type="ChEBI" id="CHEBI:59789"/>
    </ligand>
</feature>
<feature type="binding site" evidence="2">
    <location>
        <position position="147"/>
    </location>
    <ligand>
        <name>substrate</name>
    </ligand>
</feature>
<feature type="binding site" evidence="2">
    <location>
        <position position="179"/>
    </location>
    <ligand>
        <name>substrate</name>
    </ligand>
</feature>
<feature type="binding site" evidence="2">
    <location>
        <begin position="216"/>
        <end position="219"/>
    </location>
    <ligand>
        <name>substrate</name>
    </ligand>
</feature>
<name>TRMB_SHEON</name>
<reference key="1">
    <citation type="journal article" date="2002" name="Nat. Biotechnol.">
        <title>Genome sequence of the dissimilatory metal ion-reducing bacterium Shewanella oneidensis.</title>
        <authorList>
            <person name="Heidelberg J.F."/>
            <person name="Paulsen I.T."/>
            <person name="Nelson K.E."/>
            <person name="Gaidos E.J."/>
            <person name="Nelson W.C."/>
            <person name="Read T.D."/>
            <person name="Eisen J.A."/>
            <person name="Seshadri R."/>
            <person name="Ward N.L."/>
            <person name="Methe B.A."/>
            <person name="Clayton R.A."/>
            <person name="Meyer T."/>
            <person name="Tsapin A."/>
            <person name="Scott J."/>
            <person name="Beanan M.J."/>
            <person name="Brinkac L.M."/>
            <person name="Daugherty S.C."/>
            <person name="DeBoy R.T."/>
            <person name="Dodson R.J."/>
            <person name="Durkin A.S."/>
            <person name="Haft D.H."/>
            <person name="Kolonay J.F."/>
            <person name="Madupu R."/>
            <person name="Peterson J.D."/>
            <person name="Umayam L.A."/>
            <person name="White O."/>
            <person name="Wolf A.M."/>
            <person name="Vamathevan J.J."/>
            <person name="Weidman J.F."/>
            <person name="Impraim M."/>
            <person name="Lee K."/>
            <person name="Berry K.J."/>
            <person name="Lee C."/>
            <person name="Mueller J."/>
            <person name="Khouri H.M."/>
            <person name="Gill J."/>
            <person name="Utterback T.R."/>
            <person name="McDonald L.A."/>
            <person name="Feldblyum T.V."/>
            <person name="Smith H.O."/>
            <person name="Venter J.C."/>
            <person name="Nealson K.H."/>
            <person name="Fraser C.M."/>
        </authorList>
    </citation>
    <scope>NUCLEOTIDE SEQUENCE [LARGE SCALE GENOMIC DNA]</scope>
    <source>
        <strain>ATCC 700550 / JCM 31522 / CIP 106686 / LMG 19005 / NCIMB 14063 / MR-1</strain>
    </source>
</reference>
<dbReference type="EC" id="2.1.1.33" evidence="2"/>
<dbReference type="EMBL" id="AE014299">
    <property type="protein sequence ID" value="AAN56365.1"/>
    <property type="molecule type" value="Genomic_DNA"/>
</dbReference>
<dbReference type="RefSeq" id="NP_718921.1">
    <property type="nucleotide sequence ID" value="NC_004347.2"/>
</dbReference>
<dbReference type="RefSeq" id="WP_011073235.1">
    <property type="nucleotide sequence ID" value="NC_004347.2"/>
</dbReference>
<dbReference type="SMR" id="Q8EBX8"/>
<dbReference type="STRING" id="211586.SO_3367"/>
<dbReference type="PaxDb" id="211586-SO_3367"/>
<dbReference type="KEGG" id="son:SO_3367"/>
<dbReference type="PATRIC" id="fig|211586.12.peg.3267"/>
<dbReference type="eggNOG" id="COG0220">
    <property type="taxonomic scope" value="Bacteria"/>
</dbReference>
<dbReference type="HOGENOM" id="CLU_050910_0_1_6"/>
<dbReference type="OrthoDB" id="9802090at2"/>
<dbReference type="PhylomeDB" id="Q8EBX8"/>
<dbReference type="BioCyc" id="SONE211586:G1GMP-3133-MONOMER"/>
<dbReference type="UniPathway" id="UPA00989"/>
<dbReference type="Proteomes" id="UP000008186">
    <property type="component" value="Chromosome"/>
</dbReference>
<dbReference type="GO" id="GO:0043527">
    <property type="term" value="C:tRNA methyltransferase complex"/>
    <property type="evidence" value="ECO:0000318"/>
    <property type="project" value="GO_Central"/>
</dbReference>
<dbReference type="GO" id="GO:0008176">
    <property type="term" value="F:tRNA (guanine(46)-N7)-methyltransferase activity"/>
    <property type="evidence" value="ECO:0000318"/>
    <property type="project" value="GO_Central"/>
</dbReference>
<dbReference type="GO" id="GO:0036265">
    <property type="term" value="P:RNA (guanine-N7)-methylation"/>
    <property type="evidence" value="ECO:0000318"/>
    <property type="project" value="GO_Central"/>
</dbReference>
<dbReference type="GO" id="GO:0030488">
    <property type="term" value="P:tRNA methylation"/>
    <property type="evidence" value="ECO:0000318"/>
    <property type="project" value="GO_Central"/>
</dbReference>
<dbReference type="CDD" id="cd02440">
    <property type="entry name" value="AdoMet_MTases"/>
    <property type="match status" value="1"/>
</dbReference>
<dbReference type="FunFam" id="3.40.50.150:FF:000024">
    <property type="entry name" value="tRNA (guanine-N(7)-)-methyltransferase"/>
    <property type="match status" value="1"/>
</dbReference>
<dbReference type="Gene3D" id="3.40.50.150">
    <property type="entry name" value="Vaccinia Virus protein VP39"/>
    <property type="match status" value="1"/>
</dbReference>
<dbReference type="HAMAP" id="MF_01057">
    <property type="entry name" value="tRNA_methyltr_TrmB"/>
    <property type="match status" value="1"/>
</dbReference>
<dbReference type="InterPro" id="IPR029063">
    <property type="entry name" value="SAM-dependent_MTases_sf"/>
</dbReference>
<dbReference type="InterPro" id="IPR003358">
    <property type="entry name" value="tRNA_(Gua-N-7)_MeTrfase_Trmb"/>
</dbReference>
<dbReference type="InterPro" id="IPR055361">
    <property type="entry name" value="tRNA_methyltr_TrmB_bact"/>
</dbReference>
<dbReference type="NCBIfam" id="TIGR00091">
    <property type="entry name" value="tRNA (guanosine(46)-N7)-methyltransferase TrmB"/>
    <property type="match status" value="1"/>
</dbReference>
<dbReference type="PANTHER" id="PTHR23417">
    <property type="entry name" value="3-DEOXY-D-MANNO-OCTULOSONIC-ACID TRANSFERASE/TRNA GUANINE-N 7 - -METHYLTRANSFERASE"/>
    <property type="match status" value="1"/>
</dbReference>
<dbReference type="PANTHER" id="PTHR23417:SF14">
    <property type="entry name" value="PENTACOTRIPEPTIDE-REPEAT REGION OF PRORP DOMAIN-CONTAINING PROTEIN"/>
    <property type="match status" value="1"/>
</dbReference>
<dbReference type="Pfam" id="PF02390">
    <property type="entry name" value="Methyltransf_4"/>
    <property type="match status" value="1"/>
</dbReference>
<dbReference type="SUPFAM" id="SSF53335">
    <property type="entry name" value="S-adenosyl-L-methionine-dependent methyltransferases"/>
    <property type="match status" value="1"/>
</dbReference>
<dbReference type="PROSITE" id="PS51625">
    <property type="entry name" value="SAM_MT_TRMB"/>
    <property type="match status" value="1"/>
</dbReference>
<accession>Q8EBX8</accession>
<organism>
    <name type="scientific">Shewanella oneidensis (strain ATCC 700550 / JCM 31522 / CIP 106686 / LMG 19005 / NCIMB 14063 / MR-1)</name>
    <dbReference type="NCBI Taxonomy" id="211586"/>
    <lineage>
        <taxon>Bacteria</taxon>
        <taxon>Pseudomonadati</taxon>
        <taxon>Pseudomonadota</taxon>
        <taxon>Gammaproteobacteria</taxon>
        <taxon>Alteromonadales</taxon>
        <taxon>Shewanellaceae</taxon>
        <taxon>Shewanella</taxon>
    </lineage>
</organism>
<evidence type="ECO:0000250" key="1"/>
<evidence type="ECO:0000255" key="2">
    <source>
        <dbReference type="HAMAP-Rule" id="MF_01057"/>
    </source>
</evidence>
<keyword id="KW-0489">Methyltransferase</keyword>
<keyword id="KW-1185">Reference proteome</keyword>
<keyword id="KW-0949">S-adenosyl-L-methionine</keyword>
<keyword id="KW-0808">Transferase</keyword>
<keyword id="KW-0819">tRNA processing</keyword>
<gene>
    <name evidence="2" type="primary">trmB</name>
    <name type="ordered locus">SO_3367</name>
</gene>
<proteinExistence type="inferred from homology"/>
<protein>
    <recommendedName>
        <fullName evidence="2">tRNA (guanine-N(7)-)-methyltransferase</fullName>
        <ecNumber evidence="2">2.1.1.33</ecNumber>
    </recommendedName>
    <alternativeName>
        <fullName evidence="2">tRNA (guanine(46)-N(7))-methyltransferase</fullName>
    </alternativeName>
    <alternativeName>
        <fullName evidence="2">tRNA(m7G46)-methyltransferase</fullName>
    </alternativeName>
</protein>
<comment type="function">
    <text evidence="2">Catalyzes the formation of N(7)-methylguanine at position 46 (m7G46) in tRNA.</text>
</comment>
<comment type="catalytic activity">
    <reaction evidence="2">
        <text>guanosine(46) in tRNA + S-adenosyl-L-methionine = N(7)-methylguanosine(46) in tRNA + S-adenosyl-L-homocysteine</text>
        <dbReference type="Rhea" id="RHEA:42708"/>
        <dbReference type="Rhea" id="RHEA-COMP:10188"/>
        <dbReference type="Rhea" id="RHEA-COMP:10189"/>
        <dbReference type="ChEBI" id="CHEBI:57856"/>
        <dbReference type="ChEBI" id="CHEBI:59789"/>
        <dbReference type="ChEBI" id="CHEBI:74269"/>
        <dbReference type="ChEBI" id="CHEBI:74480"/>
        <dbReference type="EC" id="2.1.1.33"/>
    </reaction>
</comment>
<comment type="pathway">
    <text evidence="2">tRNA modification; N(7)-methylguanine-tRNA biosynthesis.</text>
</comment>
<comment type="similarity">
    <text evidence="2">Belongs to the class I-like SAM-binding methyltransferase superfamily. TrmB family.</text>
</comment>